<organism>
    <name type="scientific">Marchantia polymorpha</name>
    <name type="common">Common liverwort</name>
    <name type="synonym">Marchantia aquatica</name>
    <dbReference type="NCBI Taxonomy" id="3197"/>
    <lineage>
        <taxon>Eukaryota</taxon>
        <taxon>Viridiplantae</taxon>
        <taxon>Streptophyta</taxon>
        <taxon>Embryophyta</taxon>
        <taxon>Marchantiophyta</taxon>
        <taxon>Marchantiopsida</taxon>
        <taxon>Marchantiidae</taxon>
        <taxon>Marchantiales</taxon>
        <taxon>Marchantiaceae</taxon>
        <taxon>Marchantia</taxon>
    </lineage>
</organism>
<evidence type="ECO:0000255" key="1">
    <source>
        <dbReference type="HAMAP-Rule" id="MF_01391"/>
    </source>
</evidence>
<geneLocation type="chloroplast"/>
<feature type="chain" id="PRO_0000201607" description="Cytochrome c biogenesis protein CcsA">
    <location>
        <begin position="1"/>
        <end position="320"/>
    </location>
</feature>
<feature type="transmembrane region" description="Helical" evidence="1">
    <location>
        <begin position="14"/>
        <end position="34"/>
    </location>
</feature>
<feature type="transmembrane region" description="Helical" evidence="1">
    <location>
        <begin position="37"/>
        <end position="57"/>
    </location>
</feature>
<feature type="transmembrane region" description="Helical" evidence="1">
    <location>
        <begin position="68"/>
        <end position="88"/>
    </location>
</feature>
<feature type="transmembrane region" description="Helical" evidence="1">
    <location>
        <begin position="97"/>
        <end position="117"/>
    </location>
</feature>
<feature type="transmembrane region" description="Helical" evidence="1">
    <location>
        <begin position="143"/>
        <end position="163"/>
    </location>
</feature>
<feature type="transmembrane region" description="Helical" evidence="1">
    <location>
        <begin position="228"/>
        <end position="248"/>
    </location>
</feature>
<feature type="transmembrane region" description="Helical" evidence="1">
    <location>
        <begin position="263"/>
        <end position="283"/>
    </location>
</feature>
<feature type="transmembrane region" description="Helical" evidence="1">
    <location>
        <begin position="289"/>
        <end position="309"/>
    </location>
</feature>
<dbReference type="EMBL" id="X04465">
    <property type="protein sequence ID" value="CAA28133.1"/>
    <property type="molecule type" value="Genomic_DNA"/>
</dbReference>
<dbReference type="PIR" id="S01516">
    <property type="entry name" value="A05023"/>
</dbReference>
<dbReference type="RefSeq" id="NP_039347.1">
    <property type="nucleotide sequence ID" value="NC_001319.1"/>
</dbReference>
<dbReference type="SMR" id="P12214"/>
<dbReference type="GeneID" id="2702614"/>
<dbReference type="GO" id="GO:0009535">
    <property type="term" value="C:chloroplast thylakoid membrane"/>
    <property type="evidence" value="ECO:0007669"/>
    <property type="project" value="UniProtKB-SubCell"/>
</dbReference>
<dbReference type="GO" id="GO:0020037">
    <property type="term" value="F:heme binding"/>
    <property type="evidence" value="ECO:0007669"/>
    <property type="project" value="InterPro"/>
</dbReference>
<dbReference type="GO" id="GO:0017004">
    <property type="term" value="P:cytochrome complex assembly"/>
    <property type="evidence" value="ECO:0007669"/>
    <property type="project" value="UniProtKB-UniRule"/>
</dbReference>
<dbReference type="HAMAP" id="MF_01391">
    <property type="entry name" value="CytC_CcsA"/>
    <property type="match status" value="1"/>
</dbReference>
<dbReference type="InterPro" id="IPR002541">
    <property type="entry name" value="Cyt_c_assembly"/>
</dbReference>
<dbReference type="InterPro" id="IPR017562">
    <property type="entry name" value="Cyt_c_biogenesis_CcsA"/>
</dbReference>
<dbReference type="InterPro" id="IPR045062">
    <property type="entry name" value="Cyt_c_biogenesis_CcsA/CcmC"/>
</dbReference>
<dbReference type="NCBIfam" id="TIGR03144">
    <property type="entry name" value="cytochr_II_ccsB"/>
    <property type="match status" value="1"/>
</dbReference>
<dbReference type="PANTHER" id="PTHR30071:SF1">
    <property type="entry name" value="CYTOCHROME B_B6 PROTEIN-RELATED"/>
    <property type="match status" value="1"/>
</dbReference>
<dbReference type="PANTHER" id="PTHR30071">
    <property type="entry name" value="HEME EXPORTER PROTEIN C"/>
    <property type="match status" value="1"/>
</dbReference>
<dbReference type="Pfam" id="PF01578">
    <property type="entry name" value="Cytochrom_C_asm"/>
    <property type="match status" value="1"/>
</dbReference>
<comment type="function">
    <text evidence="1">Required during biogenesis of c-type cytochromes (cytochrome c6 and cytochrome f) at the step of heme attachment.</text>
</comment>
<comment type="subunit">
    <text evidence="1">May interact with Ccs1.</text>
</comment>
<comment type="subcellular location">
    <subcellularLocation>
        <location evidence="1">Plastid</location>
        <location evidence="1">Chloroplast thylakoid membrane</location>
        <topology evidence="1">Multi-pass membrane protein</topology>
    </subcellularLocation>
</comment>
<comment type="similarity">
    <text evidence="1">Belongs to the CcmF/CycK/Ccl1/NrfE/CcsA family.</text>
</comment>
<name>CCSA_MARPO</name>
<accession>P12214</accession>
<keyword id="KW-0150">Chloroplast</keyword>
<keyword id="KW-0201">Cytochrome c-type biogenesis</keyword>
<keyword id="KW-0472">Membrane</keyword>
<keyword id="KW-0934">Plastid</keyword>
<keyword id="KW-0793">Thylakoid</keyword>
<keyword id="KW-0812">Transmembrane</keyword>
<keyword id="KW-1133">Transmembrane helix</keyword>
<proteinExistence type="inferred from homology"/>
<reference key="1">
    <citation type="journal article" date="1986" name="Nature">
        <title>Chloroplast gene organization deduced from complete sequence of liverwort Marchantia polymorpha chloroplast DNA.</title>
        <authorList>
            <person name="Ohyama K."/>
            <person name="Fukuzawa H."/>
            <person name="Kohchi T."/>
            <person name="Shirai H."/>
            <person name="Sano T."/>
            <person name="Sano S."/>
            <person name="Umesono K."/>
            <person name="Shiki Y."/>
            <person name="Takeuchi M."/>
            <person name="Chang Z."/>
            <person name="Aota S."/>
            <person name="Inokuchi H."/>
            <person name="Ozeki H."/>
        </authorList>
    </citation>
    <scope>NUCLEOTIDE SEQUENCE [LARGE SCALE GENOMIC DNA]</scope>
</reference>
<reference key="2">
    <citation type="journal article" date="1988" name="J. Mol. Biol.">
        <title>Structure and organization of Marchantia polymorpha chloroplast genome. IV. Inverted repeat and small single copy regions.</title>
        <authorList>
            <person name="Kohchi T."/>
            <person name="Shirai H."/>
            <person name="Fukuzawa H."/>
            <person name="Sano T."/>
            <person name="Komano T."/>
            <person name="Umesono K."/>
            <person name="Inokuchi H."/>
            <person name="Ozeki H."/>
            <person name="Ohyama K."/>
        </authorList>
    </citation>
    <scope>NUCLEOTIDE SEQUENCE [GENOMIC DNA]</scope>
</reference>
<gene>
    <name evidence="1" type="primary">ccsA</name>
</gene>
<sequence length="320" mass="37170">MPFITLERILAHTSFFLLFFVTFIYWGKFLYINIKPITILGEISMKIACFFITTFLLIRWSSSGHFPLSNLYESSMFLSWSFTLIHLILENKSKNTWLGIITAPSAMLTHGFATLSLPKEMQESVFLVPALQSHWLMMHVTMMMLSYSTLLCGSLLAITILIITLTKQKNLPILTSYFNFPFNSFIFKNLLQPMENEILSYKTQKVFSFINFRKWQLIKELDNWSYRVISLGFPLLTIGILSGAVWANEAWGSYWNWDPKETWALITWLIFAIYLHTRMIKGWQGKKPAIIASLGFFIVWICYLGVNLLGKGLHSYGWLI</sequence>
<protein>
    <recommendedName>
        <fullName evidence="1">Cytochrome c biogenesis protein CcsA</fullName>
    </recommendedName>
</protein>